<feature type="chain" id="PRO_0000207475" description="ADP-ribosylation factor-like protein 9">
    <location>
        <begin position="1"/>
        <end position="187"/>
    </location>
</feature>
<feature type="binding site" evidence="1">
    <location>
        <begin position="25"/>
        <end position="32"/>
    </location>
    <ligand>
        <name>GTP</name>
        <dbReference type="ChEBI" id="CHEBI:37565"/>
    </ligand>
</feature>
<feature type="binding site" evidence="1">
    <location>
        <begin position="69"/>
        <end position="73"/>
    </location>
    <ligand>
        <name>GTP</name>
        <dbReference type="ChEBI" id="CHEBI:37565"/>
    </ligand>
</feature>
<feature type="binding site" evidence="1">
    <location>
        <begin position="126"/>
        <end position="129"/>
    </location>
    <ligand>
        <name>GTP</name>
        <dbReference type="ChEBI" id="CHEBI:37565"/>
    </ligand>
</feature>
<feature type="splice variant" id="VSP_055413" description="In isoform 2." evidence="2">
    <location>
        <begin position="1"/>
        <end position="64"/>
    </location>
</feature>
<accession>Q6T311</accession>
<proteinExistence type="evidence at protein level"/>
<comment type="alternative products">
    <event type="alternative splicing"/>
    <isoform>
        <id>Q6T311-1</id>
        <name>1</name>
        <sequence type="displayed"/>
    </isoform>
    <isoform>
        <id>Q6T311-2</id>
        <name>2</name>
        <sequence type="described" ref="VSP_055413"/>
    </isoform>
</comment>
<comment type="similarity">
    <text evidence="3">Belongs to the small GTPase superfamily. Arf family.</text>
</comment>
<keyword id="KW-0025">Alternative splicing</keyword>
<keyword id="KW-0342">GTP-binding</keyword>
<keyword id="KW-0547">Nucleotide-binding</keyword>
<keyword id="KW-1267">Proteomics identification</keyword>
<keyword id="KW-1185">Reference proteome</keyword>
<dbReference type="EMBL" id="AY439003">
    <property type="protein sequence ID" value="AAS07576.1"/>
    <property type="molecule type" value="mRNA"/>
</dbReference>
<dbReference type="EMBL" id="AC114766">
    <property type="status" value="NOT_ANNOTATED_CDS"/>
    <property type="molecule type" value="Genomic_DNA"/>
</dbReference>
<dbReference type="EMBL" id="AC108215">
    <property type="status" value="NOT_ANNOTATED_CDS"/>
    <property type="molecule type" value="Genomic_DNA"/>
</dbReference>
<dbReference type="EMBL" id="BM854066">
    <property type="status" value="NOT_ANNOTATED_CDS"/>
    <property type="molecule type" value="mRNA"/>
</dbReference>
<dbReference type="CCDS" id="CCDS59474.1">
    <molecule id="Q6T311-2"/>
</dbReference>
<dbReference type="RefSeq" id="NP_001388286.1">
    <molecule id="Q6T311-2"/>
    <property type="nucleotide sequence ID" value="NM_001401357.1"/>
</dbReference>
<dbReference type="RefSeq" id="NP_996802.1">
    <molecule id="Q6T311-2"/>
    <property type="nucleotide sequence ID" value="NM_206919.3"/>
</dbReference>
<dbReference type="RefSeq" id="XP_005265777.1">
    <molecule id="Q6T311-2"/>
    <property type="nucleotide sequence ID" value="XM_005265720.5"/>
</dbReference>
<dbReference type="RefSeq" id="XP_006714099.1">
    <property type="nucleotide sequence ID" value="XM_006714036.3"/>
</dbReference>
<dbReference type="RefSeq" id="XP_054204912.1">
    <molecule id="Q6T311-2"/>
    <property type="nucleotide sequence ID" value="XM_054348937.1"/>
</dbReference>
<dbReference type="SMR" id="Q6T311"/>
<dbReference type="BioGRID" id="126341">
    <property type="interactions" value="15"/>
</dbReference>
<dbReference type="FunCoup" id="Q6T311">
    <property type="interactions" value="15"/>
</dbReference>
<dbReference type="IntAct" id="Q6T311">
    <property type="interactions" value="1"/>
</dbReference>
<dbReference type="STRING" id="9606.ENSP00000492671"/>
<dbReference type="GlyGen" id="Q6T311">
    <property type="glycosylation" value="3 sites, 1 O-linked glycan (2 sites)"/>
</dbReference>
<dbReference type="iPTMnet" id="Q6T311"/>
<dbReference type="PhosphoSitePlus" id="Q6T311"/>
<dbReference type="BioMuta" id="ARL9"/>
<dbReference type="DMDM" id="74749334"/>
<dbReference type="MassIVE" id="Q6T311"/>
<dbReference type="PaxDb" id="9606-ENSP00000353210"/>
<dbReference type="PeptideAtlas" id="Q6T311"/>
<dbReference type="ProteomicsDB" id="67365">
    <molecule id="Q6T311-1"/>
</dbReference>
<dbReference type="TopDownProteomics" id="Q6T311-1">
    <molecule id="Q6T311-1"/>
</dbReference>
<dbReference type="Antibodypedia" id="24040">
    <property type="antibodies" value="28 antibodies from 11 providers"/>
</dbReference>
<dbReference type="DNASU" id="132946"/>
<dbReference type="Ensembl" id="ENST00000360096.3">
    <molecule id="Q6T311-2"/>
    <property type="protein sequence ID" value="ENSP00000353210.2"/>
    <property type="gene ID" value="ENSG00000196503.5"/>
</dbReference>
<dbReference type="GeneID" id="132946"/>
<dbReference type="KEGG" id="hsa:132946"/>
<dbReference type="UCSC" id="uc003hby.2">
    <molecule id="Q6T311-1"/>
    <property type="organism name" value="human"/>
</dbReference>
<dbReference type="AGR" id="HGNC:23592"/>
<dbReference type="CTD" id="132946"/>
<dbReference type="DisGeNET" id="132946"/>
<dbReference type="GeneCards" id="ARL9"/>
<dbReference type="HGNC" id="HGNC:23592">
    <property type="gene designation" value="ARL9"/>
</dbReference>
<dbReference type="HPA" id="ENSG00000196503">
    <property type="expression patterns" value="Group enriched (brain, choroid plexus, testis)"/>
</dbReference>
<dbReference type="MIM" id="612405">
    <property type="type" value="gene"/>
</dbReference>
<dbReference type="neXtProt" id="NX_Q6T311"/>
<dbReference type="OpenTargets" id="ENSG00000196503"/>
<dbReference type="PharmGKB" id="PA134987258"/>
<dbReference type="VEuPathDB" id="HostDB:ENSG00000196503"/>
<dbReference type="eggNOG" id="KOG0070">
    <property type="taxonomic scope" value="Eukaryota"/>
</dbReference>
<dbReference type="GeneTree" id="ENSGT00940000159397"/>
<dbReference type="HOGENOM" id="CLU_2014454_0_0_1"/>
<dbReference type="InParanoid" id="Q6T311"/>
<dbReference type="OrthoDB" id="25466at2759"/>
<dbReference type="PAN-GO" id="Q6T311">
    <property type="GO annotations" value="0 GO annotations based on evolutionary models"/>
</dbReference>
<dbReference type="PhylomeDB" id="Q6T311"/>
<dbReference type="TreeFam" id="TF105469"/>
<dbReference type="BRENDA" id="3.6.5.2">
    <property type="organism ID" value="2681"/>
</dbReference>
<dbReference type="PathwayCommons" id="Q6T311"/>
<dbReference type="SignaLink" id="Q6T311"/>
<dbReference type="BioGRID-ORCS" id="132946">
    <property type="hits" value="4 hits in 1136 CRISPR screens"/>
</dbReference>
<dbReference type="ChiTaRS" id="ARL9">
    <property type="organism name" value="human"/>
</dbReference>
<dbReference type="GenomeRNAi" id="132946"/>
<dbReference type="Pharos" id="Q6T311">
    <property type="development level" value="Tdark"/>
</dbReference>
<dbReference type="PRO" id="PR:Q6T311"/>
<dbReference type="Proteomes" id="UP000005640">
    <property type="component" value="Chromosome 4"/>
</dbReference>
<dbReference type="RNAct" id="Q6T311">
    <property type="molecule type" value="protein"/>
</dbReference>
<dbReference type="Bgee" id="ENSG00000196503">
    <property type="expression patterns" value="Expressed in cortical plate and 99 other cell types or tissues"/>
</dbReference>
<dbReference type="ExpressionAtlas" id="Q6T311">
    <property type="expression patterns" value="baseline and differential"/>
</dbReference>
<dbReference type="GO" id="GO:0005525">
    <property type="term" value="F:GTP binding"/>
    <property type="evidence" value="ECO:0007669"/>
    <property type="project" value="UniProtKB-KW"/>
</dbReference>
<dbReference type="GO" id="GO:0003924">
    <property type="term" value="F:GTPase activity"/>
    <property type="evidence" value="ECO:0007669"/>
    <property type="project" value="InterPro"/>
</dbReference>
<dbReference type="CDD" id="cd04162">
    <property type="entry name" value="Arl9_Arfrp2_like"/>
    <property type="match status" value="1"/>
</dbReference>
<dbReference type="Gene3D" id="3.40.50.300">
    <property type="entry name" value="P-loop containing nucleotide triphosphate hydrolases"/>
    <property type="match status" value="1"/>
</dbReference>
<dbReference type="InterPro" id="IPR053254">
    <property type="entry name" value="Arf-like_GTPase"/>
</dbReference>
<dbReference type="InterPro" id="IPR027417">
    <property type="entry name" value="P-loop_NTPase"/>
</dbReference>
<dbReference type="InterPro" id="IPR005225">
    <property type="entry name" value="Small_GTP-bd"/>
</dbReference>
<dbReference type="InterPro" id="IPR006689">
    <property type="entry name" value="Small_GTPase_ARF/SAR"/>
</dbReference>
<dbReference type="NCBIfam" id="TIGR00231">
    <property type="entry name" value="small_GTP"/>
    <property type="match status" value="1"/>
</dbReference>
<dbReference type="PANTHER" id="PTHR46724:SF2">
    <property type="entry name" value="ADP-RIBOSYLATION FACTOR-LIKE PROTEIN 9"/>
    <property type="match status" value="1"/>
</dbReference>
<dbReference type="PANTHER" id="PTHR46724">
    <property type="entry name" value="ADP-RIBOSYLATION FACTOR-LIKE PROTEIN 9-RELATED"/>
    <property type="match status" value="1"/>
</dbReference>
<dbReference type="Pfam" id="PF00025">
    <property type="entry name" value="Arf"/>
    <property type="match status" value="1"/>
</dbReference>
<dbReference type="PRINTS" id="PR00328">
    <property type="entry name" value="SAR1GTPBP"/>
</dbReference>
<dbReference type="SMART" id="SM00177">
    <property type="entry name" value="ARF"/>
    <property type="match status" value="1"/>
</dbReference>
<dbReference type="SMART" id="SM00178">
    <property type="entry name" value="SAR"/>
    <property type="match status" value="1"/>
</dbReference>
<dbReference type="SUPFAM" id="SSF52540">
    <property type="entry name" value="P-loop containing nucleoside triphosphate hydrolases"/>
    <property type="match status" value="1"/>
</dbReference>
<dbReference type="PROSITE" id="PS51417">
    <property type="entry name" value="ARF"/>
    <property type="match status" value="1"/>
</dbReference>
<reference key="1">
    <citation type="journal article" date="2004" name="Biochem. Biophys. Res. Commun.">
        <title>Rasl11a, member of a novel small monomeric GTPase gene family, is differentially expressed in prostate tumors.</title>
        <authorList>
            <person name="Louro R."/>
            <person name="Nakaya H.I."/>
            <person name="Paquola A.C.M."/>
            <person name="Martins E.A.L."/>
            <person name="da Silva A.M."/>
            <person name="Verjovski-Almeida S."/>
            <person name="Reis E.M."/>
        </authorList>
    </citation>
    <scope>NUCLEOTIDE SEQUENCE [MRNA] (ISOFORM 1)</scope>
</reference>
<reference key="2">
    <citation type="journal article" date="2005" name="Nature">
        <title>Generation and annotation of the DNA sequences of human chromosomes 2 and 4.</title>
        <authorList>
            <person name="Hillier L.W."/>
            <person name="Graves T.A."/>
            <person name="Fulton R.S."/>
            <person name="Fulton L.A."/>
            <person name="Pepin K.H."/>
            <person name="Minx P."/>
            <person name="Wagner-McPherson C."/>
            <person name="Layman D."/>
            <person name="Wylie K."/>
            <person name="Sekhon M."/>
            <person name="Becker M.C."/>
            <person name="Fewell G.A."/>
            <person name="Delehaunty K.D."/>
            <person name="Miner T.L."/>
            <person name="Nash W.E."/>
            <person name="Kremitzki C."/>
            <person name="Oddy L."/>
            <person name="Du H."/>
            <person name="Sun H."/>
            <person name="Bradshaw-Cordum H."/>
            <person name="Ali J."/>
            <person name="Carter J."/>
            <person name="Cordes M."/>
            <person name="Harris A."/>
            <person name="Isak A."/>
            <person name="van Brunt A."/>
            <person name="Nguyen C."/>
            <person name="Du F."/>
            <person name="Courtney L."/>
            <person name="Kalicki J."/>
            <person name="Ozersky P."/>
            <person name="Abbott S."/>
            <person name="Armstrong J."/>
            <person name="Belter E.A."/>
            <person name="Caruso L."/>
            <person name="Cedroni M."/>
            <person name="Cotton M."/>
            <person name="Davidson T."/>
            <person name="Desai A."/>
            <person name="Elliott G."/>
            <person name="Erb T."/>
            <person name="Fronick C."/>
            <person name="Gaige T."/>
            <person name="Haakenson W."/>
            <person name="Haglund K."/>
            <person name="Holmes A."/>
            <person name="Harkins R."/>
            <person name="Kim K."/>
            <person name="Kruchowski S.S."/>
            <person name="Strong C.M."/>
            <person name="Grewal N."/>
            <person name="Goyea E."/>
            <person name="Hou S."/>
            <person name="Levy A."/>
            <person name="Martinka S."/>
            <person name="Mead K."/>
            <person name="McLellan M.D."/>
            <person name="Meyer R."/>
            <person name="Randall-Maher J."/>
            <person name="Tomlinson C."/>
            <person name="Dauphin-Kohlberg S."/>
            <person name="Kozlowicz-Reilly A."/>
            <person name="Shah N."/>
            <person name="Swearengen-Shahid S."/>
            <person name="Snider J."/>
            <person name="Strong J.T."/>
            <person name="Thompson J."/>
            <person name="Yoakum M."/>
            <person name="Leonard S."/>
            <person name="Pearman C."/>
            <person name="Trani L."/>
            <person name="Radionenko M."/>
            <person name="Waligorski J.E."/>
            <person name="Wang C."/>
            <person name="Rock S.M."/>
            <person name="Tin-Wollam A.-M."/>
            <person name="Maupin R."/>
            <person name="Latreille P."/>
            <person name="Wendl M.C."/>
            <person name="Yang S.-P."/>
            <person name="Pohl C."/>
            <person name="Wallis J.W."/>
            <person name="Spieth J."/>
            <person name="Bieri T.A."/>
            <person name="Berkowicz N."/>
            <person name="Nelson J.O."/>
            <person name="Osborne J."/>
            <person name="Ding L."/>
            <person name="Meyer R."/>
            <person name="Sabo A."/>
            <person name="Shotland Y."/>
            <person name="Sinha P."/>
            <person name="Wohldmann P.E."/>
            <person name="Cook L.L."/>
            <person name="Hickenbotham M.T."/>
            <person name="Eldred J."/>
            <person name="Williams D."/>
            <person name="Jones T.A."/>
            <person name="She X."/>
            <person name="Ciccarelli F.D."/>
            <person name="Izaurralde E."/>
            <person name="Taylor J."/>
            <person name="Schmutz J."/>
            <person name="Myers R.M."/>
            <person name="Cox D.R."/>
            <person name="Huang X."/>
            <person name="McPherson J.D."/>
            <person name="Mardis E.R."/>
            <person name="Clifton S.W."/>
            <person name="Warren W.C."/>
            <person name="Chinwalla A.T."/>
            <person name="Eddy S.R."/>
            <person name="Marra M.A."/>
            <person name="Ovcharenko I."/>
            <person name="Furey T.S."/>
            <person name="Miller W."/>
            <person name="Eichler E.E."/>
            <person name="Bork P."/>
            <person name="Suyama M."/>
            <person name="Torrents D."/>
            <person name="Waterston R.H."/>
            <person name="Wilson R.K."/>
        </authorList>
    </citation>
    <scope>NUCLEOTIDE SEQUENCE [LARGE SCALE GENOMIC DNA]</scope>
</reference>
<reference key="3">
    <citation type="journal article" date="2005" name="Mamm. Genome">
        <title>Transcriptome analysis of human gastric cancer.</title>
        <authorList>
            <person name="Oh J.H."/>
            <person name="Yang J.O."/>
            <person name="Hahn Y."/>
            <person name="Kim M.R."/>
            <person name="Byun S.S."/>
            <person name="Jeon Y.J."/>
            <person name="Kim J.M."/>
            <person name="Song K.S."/>
            <person name="Noh S.M."/>
            <person name="Kim S."/>
            <person name="Yoo H.S."/>
            <person name="Kim Y.S."/>
            <person name="Kim N.S."/>
        </authorList>
    </citation>
    <scope>NUCLEOTIDE SEQUENCE [LARGE SCALE MRNA] OF 1-98 (ISOFORM 2)</scope>
</reference>
<gene>
    <name type="primary">ARL9</name>
</gene>
<evidence type="ECO:0000250" key="1"/>
<evidence type="ECO:0000303" key="2">
    <source>
    </source>
</evidence>
<evidence type="ECO:0000305" key="3"/>
<organism>
    <name type="scientific">Homo sapiens</name>
    <name type="common">Human</name>
    <dbReference type="NCBI Taxonomy" id="9606"/>
    <lineage>
        <taxon>Eukaryota</taxon>
        <taxon>Metazoa</taxon>
        <taxon>Chordata</taxon>
        <taxon>Craniata</taxon>
        <taxon>Vertebrata</taxon>
        <taxon>Euteleostomi</taxon>
        <taxon>Mammalia</taxon>
        <taxon>Eutheria</taxon>
        <taxon>Euarchontoglires</taxon>
        <taxon>Primates</taxon>
        <taxon>Haplorrhini</taxon>
        <taxon>Catarrhini</taxon>
        <taxon>Hominidae</taxon>
        <taxon>Homo</taxon>
    </lineage>
</organism>
<sequence>MRPTWKALSHPAWPEEKNKQILVLGLDGAGKTSVLHSLASNRVQHSVAPTQGFHAVCINTEDSQMEFLEIGGSKPFRSYWEMYLSKGLLLIFVVDSADHSRLPEAKKYLHQLIAANPVLPLVVFANKQDLEAAYHITDIHEALALSEVGNDRKMFLFGTYLTKNGSEIPSTMQDAKDLIAQLAADVQ</sequence>
<name>ARL9_HUMAN</name>
<protein>
    <recommendedName>
        <fullName>ADP-ribosylation factor-like protein 9</fullName>
    </recommendedName>
</protein>